<reference key="1">
    <citation type="journal article" date="1987" name="Arch. Biochem. Biophys.">
        <title>Purification and properties of the manganese superoxide dismutase from the liver of bullfrog, Rana catesbeiana.</title>
        <authorList>
            <person name="Abe Y."/>
            <person name="Okazaki T."/>
        </authorList>
    </citation>
    <scope>PROTEIN SEQUENCE</scope>
    <source>
        <tissue>Liver</tissue>
    </source>
</reference>
<name>SODM_AQUCT</name>
<organism>
    <name type="scientific">Aquarana catesbeiana</name>
    <name type="common">American bullfrog</name>
    <name type="synonym">Rana catesbeiana</name>
    <dbReference type="NCBI Taxonomy" id="8400"/>
    <lineage>
        <taxon>Eukaryota</taxon>
        <taxon>Metazoa</taxon>
        <taxon>Chordata</taxon>
        <taxon>Craniata</taxon>
        <taxon>Vertebrata</taxon>
        <taxon>Euteleostomi</taxon>
        <taxon>Amphibia</taxon>
        <taxon>Batrachia</taxon>
        <taxon>Anura</taxon>
        <taxon>Neobatrachia</taxon>
        <taxon>Ranoidea</taxon>
        <taxon>Ranidae</taxon>
        <taxon>Aquarana</taxon>
    </lineage>
</organism>
<evidence type="ECO:0000250" key="1"/>
<evidence type="ECO:0000305" key="2"/>
<sequence>KHTLPDLPYDFGALQPHISAEIM</sequence>
<protein>
    <recommendedName>
        <fullName>Superoxide dismutase [Mn], mitochondrial</fullName>
        <ecNumber>1.15.1.1</ecNumber>
    </recommendedName>
</protein>
<feature type="chain" id="PRO_0000159963" description="Superoxide dismutase [Mn], mitochondrial">
    <location>
        <begin position="1"/>
        <end position="23" status="greater than"/>
    </location>
</feature>
<feature type="non-terminal residue">
    <location>
        <position position="23"/>
    </location>
</feature>
<dbReference type="EC" id="1.15.1.1"/>
<dbReference type="GO" id="GO:0005759">
    <property type="term" value="C:mitochondrial matrix"/>
    <property type="evidence" value="ECO:0007669"/>
    <property type="project" value="UniProtKB-SubCell"/>
</dbReference>
<dbReference type="GO" id="GO:0046872">
    <property type="term" value="F:metal ion binding"/>
    <property type="evidence" value="ECO:0007669"/>
    <property type="project" value="UniProtKB-KW"/>
</dbReference>
<dbReference type="GO" id="GO:0004784">
    <property type="term" value="F:superoxide dismutase activity"/>
    <property type="evidence" value="ECO:0007669"/>
    <property type="project" value="UniProtKB-EC"/>
</dbReference>
<dbReference type="InterPro" id="IPR019831">
    <property type="entry name" value="Mn/Fe_SOD_N"/>
</dbReference>
<dbReference type="InterPro" id="IPR036324">
    <property type="entry name" value="Mn/Fe_SOD_N_sf"/>
</dbReference>
<dbReference type="Pfam" id="PF00081">
    <property type="entry name" value="Sod_Fe_N"/>
    <property type="match status" value="1"/>
</dbReference>
<dbReference type="SUPFAM" id="SSF46609">
    <property type="entry name" value="Fe,Mn superoxide dismutase (SOD), N-terminal domain"/>
    <property type="match status" value="1"/>
</dbReference>
<accession>P36215</accession>
<comment type="function">
    <text>Destroys superoxide anion radicals which are normally produced within the cells and which are toxic to biological systems.</text>
</comment>
<comment type="catalytic activity">
    <reaction>
        <text>2 superoxide + 2 H(+) = H2O2 + O2</text>
        <dbReference type="Rhea" id="RHEA:20696"/>
        <dbReference type="ChEBI" id="CHEBI:15378"/>
        <dbReference type="ChEBI" id="CHEBI:15379"/>
        <dbReference type="ChEBI" id="CHEBI:16240"/>
        <dbReference type="ChEBI" id="CHEBI:18421"/>
        <dbReference type="EC" id="1.15.1.1"/>
    </reaction>
</comment>
<comment type="cofactor">
    <cofactor evidence="1">
        <name>Mn(2+)</name>
        <dbReference type="ChEBI" id="CHEBI:29035"/>
    </cofactor>
    <text evidence="1">Binds 1 Mn(2+) ion per subunit.</text>
</comment>
<comment type="subunit">
    <text>Homotetramer.</text>
</comment>
<comment type="subcellular location">
    <subcellularLocation>
        <location>Mitochondrion matrix</location>
    </subcellularLocation>
</comment>
<comment type="similarity">
    <text evidence="2">Belongs to the iron/manganese superoxide dismutase family.</text>
</comment>
<keyword id="KW-0903">Direct protein sequencing</keyword>
<keyword id="KW-0464">Manganese</keyword>
<keyword id="KW-0479">Metal-binding</keyword>
<keyword id="KW-0496">Mitochondrion</keyword>
<keyword id="KW-0560">Oxidoreductase</keyword>
<proteinExistence type="evidence at protein level"/>